<keyword id="KW-0067">ATP-binding</keyword>
<keyword id="KW-0436">Ligase</keyword>
<keyword id="KW-0479">Metal-binding</keyword>
<keyword id="KW-0547">Nucleotide-binding</keyword>
<keyword id="KW-0862">Zinc</keyword>
<reference key="1">
    <citation type="submission" date="2007-06" db="EMBL/GenBank/DDBJ databases">
        <title>Complete sequence of Methanococcus maripaludis C7.</title>
        <authorList>
            <consortium name="US DOE Joint Genome Institute"/>
            <person name="Copeland A."/>
            <person name="Lucas S."/>
            <person name="Lapidus A."/>
            <person name="Barry K."/>
            <person name="Glavina del Rio T."/>
            <person name="Dalin E."/>
            <person name="Tice H."/>
            <person name="Pitluck S."/>
            <person name="Clum A."/>
            <person name="Schmutz J."/>
            <person name="Larimer F."/>
            <person name="Land M."/>
            <person name="Hauser L."/>
            <person name="Kyrpides N."/>
            <person name="Anderson I."/>
            <person name="Sieprawska-Lupa M."/>
            <person name="Whitman W.B."/>
            <person name="Richardson P."/>
        </authorList>
    </citation>
    <scope>NUCLEOTIDE SEQUENCE [LARGE SCALE GENOMIC DNA]</scope>
    <source>
        <strain>C7 / ATCC BAA-1331</strain>
    </source>
</reference>
<feature type="chain" id="PRO_1000069780" description="7-cyano-7-deazaguanine synthase">
    <location>
        <begin position="1"/>
        <end position="233"/>
    </location>
</feature>
<feature type="binding site" evidence="1">
    <location>
        <begin position="7"/>
        <end position="17"/>
    </location>
    <ligand>
        <name>ATP</name>
        <dbReference type="ChEBI" id="CHEBI:30616"/>
    </ligand>
</feature>
<feature type="binding site" evidence="1">
    <location>
        <position position="195"/>
    </location>
    <ligand>
        <name>Zn(2+)</name>
        <dbReference type="ChEBI" id="CHEBI:29105"/>
    </ligand>
</feature>
<feature type="binding site" evidence="1">
    <location>
        <position position="206"/>
    </location>
    <ligand>
        <name>Zn(2+)</name>
        <dbReference type="ChEBI" id="CHEBI:29105"/>
    </ligand>
</feature>
<feature type="binding site" evidence="1">
    <location>
        <position position="209"/>
    </location>
    <ligand>
        <name>Zn(2+)</name>
        <dbReference type="ChEBI" id="CHEBI:29105"/>
    </ligand>
</feature>
<feature type="binding site" evidence="1">
    <location>
        <position position="212"/>
    </location>
    <ligand>
        <name>Zn(2+)</name>
        <dbReference type="ChEBI" id="CHEBI:29105"/>
    </ligand>
</feature>
<organism>
    <name type="scientific">Methanococcus maripaludis (strain C7 / ATCC BAA-1331)</name>
    <dbReference type="NCBI Taxonomy" id="426368"/>
    <lineage>
        <taxon>Archaea</taxon>
        <taxon>Methanobacteriati</taxon>
        <taxon>Methanobacteriota</taxon>
        <taxon>Methanomada group</taxon>
        <taxon>Methanococci</taxon>
        <taxon>Methanococcales</taxon>
        <taxon>Methanococcaceae</taxon>
        <taxon>Methanococcus</taxon>
    </lineage>
</organism>
<gene>
    <name evidence="1" type="primary">queC</name>
    <name type="ordered locus">MmarC7_1226</name>
</gene>
<sequence length="233" mass="26227">MRAICVLSGGLDSAVTSLAAKFENYDITTVTFNYGQMALNQEIKSAKKISEILNADHHVIDINFVKEFSKSGLNTGEIPEPEKEDLDDFEKSEKTMKAVWVPARNMIMFSIASGFAEGIGAEKIFSGLNKEEGVTFPDNTPEFIERFNKSLEYGTLNKVKMVAPLYELNKPEIAKLGKELEVKLDLEVLKYSYSCYRDNGEDYLHCGTCESCMRRKRAFKEAGIVDPTKYLVE</sequence>
<name>QUEC_METM7</name>
<proteinExistence type="inferred from homology"/>
<evidence type="ECO:0000255" key="1">
    <source>
        <dbReference type="HAMAP-Rule" id="MF_01633"/>
    </source>
</evidence>
<dbReference type="EC" id="6.3.4.20" evidence="1"/>
<dbReference type="EMBL" id="CP000745">
    <property type="protein sequence ID" value="ABR66289.1"/>
    <property type="molecule type" value="Genomic_DNA"/>
</dbReference>
<dbReference type="SMR" id="A6VIL3"/>
<dbReference type="STRING" id="426368.MmarC7_1226"/>
<dbReference type="KEGG" id="mmz:MmarC7_1226"/>
<dbReference type="eggNOG" id="arCOG00039">
    <property type="taxonomic scope" value="Archaea"/>
</dbReference>
<dbReference type="HOGENOM" id="CLU_081854_1_1_2"/>
<dbReference type="OrthoDB" id="6532at2157"/>
<dbReference type="UniPathway" id="UPA00391"/>
<dbReference type="GO" id="GO:0005524">
    <property type="term" value="F:ATP binding"/>
    <property type="evidence" value="ECO:0007669"/>
    <property type="project" value="UniProtKB-UniRule"/>
</dbReference>
<dbReference type="GO" id="GO:0016879">
    <property type="term" value="F:ligase activity, forming carbon-nitrogen bonds"/>
    <property type="evidence" value="ECO:0007669"/>
    <property type="project" value="UniProtKB-UniRule"/>
</dbReference>
<dbReference type="GO" id="GO:0008270">
    <property type="term" value="F:zinc ion binding"/>
    <property type="evidence" value="ECO:0007669"/>
    <property type="project" value="UniProtKB-UniRule"/>
</dbReference>
<dbReference type="CDD" id="cd01995">
    <property type="entry name" value="QueC-like"/>
    <property type="match status" value="1"/>
</dbReference>
<dbReference type="Gene3D" id="3.40.50.620">
    <property type="entry name" value="HUPs"/>
    <property type="match status" value="1"/>
</dbReference>
<dbReference type="HAMAP" id="MF_01633">
    <property type="entry name" value="QueC"/>
    <property type="match status" value="1"/>
</dbReference>
<dbReference type="InterPro" id="IPR018317">
    <property type="entry name" value="QueC"/>
</dbReference>
<dbReference type="InterPro" id="IPR014729">
    <property type="entry name" value="Rossmann-like_a/b/a_fold"/>
</dbReference>
<dbReference type="NCBIfam" id="TIGR00364">
    <property type="entry name" value="7-cyano-7-deazaguanine synthase QueC"/>
    <property type="match status" value="1"/>
</dbReference>
<dbReference type="PANTHER" id="PTHR42914">
    <property type="entry name" value="7-CYANO-7-DEAZAGUANINE SYNTHASE"/>
    <property type="match status" value="1"/>
</dbReference>
<dbReference type="PANTHER" id="PTHR42914:SF1">
    <property type="entry name" value="7-CYANO-7-DEAZAGUANINE SYNTHASE"/>
    <property type="match status" value="1"/>
</dbReference>
<dbReference type="Pfam" id="PF06508">
    <property type="entry name" value="QueC"/>
    <property type="match status" value="1"/>
</dbReference>
<dbReference type="PIRSF" id="PIRSF006293">
    <property type="entry name" value="ExsB"/>
    <property type="match status" value="1"/>
</dbReference>
<dbReference type="SUPFAM" id="SSF52402">
    <property type="entry name" value="Adenine nucleotide alpha hydrolases-like"/>
    <property type="match status" value="1"/>
</dbReference>
<accession>A6VIL3</accession>
<comment type="function">
    <text evidence="1">Catalyzes the ATP-dependent conversion of 7-carboxy-7-deazaguanine (CDG) to 7-cyano-7-deazaguanine (preQ(0)).</text>
</comment>
<comment type="catalytic activity">
    <reaction evidence="1">
        <text>7-carboxy-7-deazaguanine + NH4(+) + ATP = 7-cyano-7-deazaguanine + ADP + phosphate + H2O + H(+)</text>
        <dbReference type="Rhea" id="RHEA:27982"/>
        <dbReference type="ChEBI" id="CHEBI:15377"/>
        <dbReference type="ChEBI" id="CHEBI:15378"/>
        <dbReference type="ChEBI" id="CHEBI:28938"/>
        <dbReference type="ChEBI" id="CHEBI:30616"/>
        <dbReference type="ChEBI" id="CHEBI:43474"/>
        <dbReference type="ChEBI" id="CHEBI:45075"/>
        <dbReference type="ChEBI" id="CHEBI:61036"/>
        <dbReference type="ChEBI" id="CHEBI:456216"/>
        <dbReference type="EC" id="6.3.4.20"/>
    </reaction>
</comment>
<comment type="cofactor">
    <cofactor evidence="1">
        <name>Zn(2+)</name>
        <dbReference type="ChEBI" id="CHEBI:29105"/>
    </cofactor>
    <text evidence="1">Binds 1 zinc ion per subunit.</text>
</comment>
<comment type="pathway">
    <text evidence="1">Purine metabolism; 7-cyano-7-deazaguanine biosynthesis.</text>
</comment>
<comment type="similarity">
    <text evidence="1">Belongs to the QueC family.</text>
</comment>
<protein>
    <recommendedName>
        <fullName evidence="1">7-cyano-7-deazaguanine synthase</fullName>
        <ecNumber evidence="1">6.3.4.20</ecNumber>
    </recommendedName>
    <alternativeName>
        <fullName evidence="1">7-cyano-7-carbaguanine synthase</fullName>
    </alternativeName>
    <alternativeName>
        <fullName evidence="1">Archaeosine biosynthesis protein QueC</fullName>
    </alternativeName>
    <alternativeName>
        <fullName evidence="1">PreQ(0) synthase</fullName>
    </alternativeName>
</protein>